<name>UREG1_METRJ</name>
<organism>
    <name type="scientific">Methylobacterium radiotolerans (strain ATCC 27329 / DSM 1819 / JCM 2831 / NBRC 15690 / NCIMB 10815 / 0-1)</name>
    <dbReference type="NCBI Taxonomy" id="426355"/>
    <lineage>
        <taxon>Bacteria</taxon>
        <taxon>Pseudomonadati</taxon>
        <taxon>Pseudomonadota</taxon>
        <taxon>Alphaproteobacteria</taxon>
        <taxon>Hyphomicrobiales</taxon>
        <taxon>Methylobacteriaceae</taxon>
        <taxon>Methylobacterium</taxon>
    </lineage>
</organism>
<dbReference type="EMBL" id="CP001001">
    <property type="protein sequence ID" value="ACB24851.1"/>
    <property type="molecule type" value="Genomic_DNA"/>
</dbReference>
<dbReference type="SMR" id="B1M3X4"/>
<dbReference type="STRING" id="426355.Mrad2831_2867"/>
<dbReference type="GeneID" id="6138911"/>
<dbReference type="KEGG" id="mrd:Mrad2831_2867"/>
<dbReference type="eggNOG" id="COG0378">
    <property type="taxonomic scope" value="Bacteria"/>
</dbReference>
<dbReference type="HOGENOM" id="CLU_072144_1_0_5"/>
<dbReference type="OrthoDB" id="9802035at2"/>
<dbReference type="Proteomes" id="UP000006589">
    <property type="component" value="Chromosome"/>
</dbReference>
<dbReference type="GO" id="GO:0005737">
    <property type="term" value="C:cytoplasm"/>
    <property type="evidence" value="ECO:0007669"/>
    <property type="project" value="UniProtKB-SubCell"/>
</dbReference>
<dbReference type="GO" id="GO:0005525">
    <property type="term" value="F:GTP binding"/>
    <property type="evidence" value="ECO:0007669"/>
    <property type="project" value="UniProtKB-KW"/>
</dbReference>
<dbReference type="GO" id="GO:0003924">
    <property type="term" value="F:GTPase activity"/>
    <property type="evidence" value="ECO:0007669"/>
    <property type="project" value="InterPro"/>
</dbReference>
<dbReference type="GO" id="GO:0016151">
    <property type="term" value="F:nickel cation binding"/>
    <property type="evidence" value="ECO:0007669"/>
    <property type="project" value="UniProtKB-UniRule"/>
</dbReference>
<dbReference type="GO" id="GO:0043419">
    <property type="term" value="P:urea catabolic process"/>
    <property type="evidence" value="ECO:0007669"/>
    <property type="project" value="InterPro"/>
</dbReference>
<dbReference type="CDD" id="cd05540">
    <property type="entry name" value="UreG"/>
    <property type="match status" value="1"/>
</dbReference>
<dbReference type="FunFam" id="3.40.50.300:FF:000208">
    <property type="entry name" value="Urease accessory protein UreG"/>
    <property type="match status" value="1"/>
</dbReference>
<dbReference type="Gene3D" id="3.40.50.300">
    <property type="entry name" value="P-loop containing nucleotide triphosphate hydrolases"/>
    <property type="match status" value="1"/>
</dbReference>
<dbReference type="HAMAP" id="MF_01389">
    <property type="entry name" value="UreG"/>
    <property type="match status" value="1"/>
</dbReference>
<dbReference type="InterPro" id="IPR003495">
    <property type="entry name" value="CobW/HypB/UreG_nucleotide-bd"/>
</dbReference>
<dbReference type="InterPro" id="IPR027417">
    <property type="entry name" value="P-loop_NTPase"/>
</dbReference>
<dbReference type="InterPro" id="IPR004400">
    <property type="entry name" value="UreG"/>
</dbReference>
<dbReference type="NCBIfam" id="TIGR00101">
    <property type="entry name" value="ureG"/>
    <property type="match status" value="1"/>
</dbReference>
<dbReference type="PANTHER" id="PTHR31715">
    <property type="entry name" value="UREASE ACCESSORY PROTEIN G"/>
    <property type="match status" value="1"/>
</dbReference>
<dbReference type="PANTHER" id="PTHR31715:SF0">
    <property type="entry name" value="UREASE ACCESSORY PROTEIN G"/>
    <property type="match status" value="1"/>
</dbReference>
<dbReference type="Pfam" id="PF02492">
    <property type="entry name" value="cobW"/>
    <property type="match status" value="1"/>
</dbReference>
<dbReference type="PIRSF" id="PIRSF005624">
    <property type="entry name" value="Ni-bind_GTPase"/>
    <property type="match status" value="1"/>
</dbReference>
<dbReference type="SUPFAM" id="SSF52540">
    <property type="entry name" value="P-loop containing nucleoside triphosphate hydrolases"/>
    <property type="match status" value="1"/>
</dbReference>
<protein>
    <recommendedName>
        <fullName evidence="1">Urease accessory protein UreG 1</fullName>
    </recommendedName>
</protein>
<keyword id="KW-0143">Chaperone</keyword>
<keyword id="KW-0963">Cytoplasm</keyword>
<keyword id="KW-0342">GTP-binding</keyword>
<keyword id="KW-0996">Nickel insertion</keyword>
<keyword id="KW-0547">Nucleotide-binding</keyword>
<evidence type="ECO:0000255" key="1">
    <source>
        <dbReference type="HAMAP-Rule" id="MF_01389"/>
    </source>
</evidence>
<sequence length="205" mass="21777">MTSTNGPLRVGIGGPVGSGKTALMEQLCKRFRDRYEICAITNDIYTKEDARILTVAGALPEERILGVETGGCPHTAIREDASINLAAVAEMSRRFPKLDLVLIESGGDNLAATFSPELADITLYVIDVAGGEKIPRKGGPGITRSDLLIVNKTDLAPLVGADLSVMESDTQRMRGTRPYVFASLREGTGADAVARFVEEAGGLGR</sequence>
<feature type="chain" id="PRO_0000347406" description="Urease accessory protein UreG 1">
    <location>
        <begin position="1"/>
        <end position="205"/>
    </location>
</feature>
<feature type="binding site" evidence="1">
    <location>
        <begin position="14"/>
        <end position="21"/>
    </location>
    <ligand>
        <name>GTP</name>
        <dbReference type="ChEBI" id="CHEBI:37565"/>
    </ligand>
</feature>
<accession>B1M3X4</accession>
<proteinExistence type="inferred from homology"/>
<reference key="1">
    <citation type="submission" date="2008-03" db="EMBL/GenBank/DDBJ databases">
        <title>Complete sequence of chromosome of Methylobacterium radiotolerans JCM 2831.</title>
        <authorList>
            <consortium name="US DOE Joint Genome Institute"/>
            <person name="Copeland A."/>
            <person name="Lucas S."/>
            <person name="Lapidus A."/>
            <person name="Glavina del Rio T."/>
            <person name="Dalin E."/>
            <person name="Tice H."/>
            <person name="Bruce D."/>
            <person name="Goodwin L."/>
            <person name="Pitluck S."/>
            <person name="Kiss H."/>
            <person name="Brettin T."/>
            <person name="Detter J.C."/>
            <person name="Han C."/>
            <person name="Kuske C.R."/>
            <person name="Schmutz J."/>
            <person name="Larimer F."/>
            <person name="Land M."/>
            <person name="Hauser L."/>
            <person name="Kyrpides N."/>
            <person name="Mikhailova N."/>
            <person name="Marx C.J."/>
            <person name="Richardson P."/>
        </authorList>
    </citation>
    <scope>NUCLEOTIDE SEQUENCE [LARGE SCALE GENOMIC DNA]</scope>
    <source>
        <strain>ATCC 27329 / DSM 1819 / JCM 2831 / NBRC 15690 / NCIMB 10815 / 0-1</strain>
    </source>
</reference>
<comment type="function">
    <text evidence="1">Facilitates the functional incorporation of the urease nickel metallocenter. This process requires GTP hydrolysis, probably effectuated by UreG.</text>
</comment>
<comment type="subunit">
    <text evidence="1">Homodimer. UreD, UreF and UreG form a complex that acts as a GTP-hydrolysis-dependent molecular chaperone, activating the urease apoprotein by helping to assemble the nickel containing metallocenter of UreC. The UreE protein probably delivers the nickel.</text>
</comment>
<comment type="subcellular location">
    <subcellularLocation>
        <location evidence="1">Cytoplasm</location>
    </subcellularLocation>
</comment>
<comment type="similarity">
    <text evidence="1">Belongs to the SIMIBI class G3E GTPase family. UreG subfamily.</text>
</comment>
<gene>
    <name evidence="1" type="primary">ureG1</name>
    <name type="ordered locus">Mrad2831_2867</name>
</gene>